<protein>
    <recommendedName>
        <fullName evidence="6">Alkane hydroxylase MAH1</fullName>
        <ecNumber evidence="8">1.14.-.-</ecNumber>
    </recommendedName>
    <alternativeName>
        <fullName evidence="7">Cytochrome P450 96A15</fullName>
    </alternativeName>
    <alternativeName>
        <fullName evidence="6">Protein MID-CHAIN ALKANE HYDROXYLASE 1</fullName>
    </alternativeName>
</protein>
<proteinExistence type="evidence at transcript level"/>
<comment type="function">
    <text evidence="4">Involved in the formation of secondary alcohols and ketones in stem cuticular wax. Catalyzes the hydroxylation of a methylene unit in the middle of alkane molecules to form secondary alcohols and possibly also a second hydroxylation leading to the corresponding ketones.</text>
</comment>
<comment type="cofactor">
    <cofactor evidence="7">
        <name>heme</name>
        <dbReference type="ChEBI" id="CHEBI:30413"/>
    </cofactor>
</comment>
<comment type="subcellular location">
    <subcellularLocation>
        <location evidence="8">Endoplasmic reticulum membrane</location>
        <topology evidence="7">Single-pass membrane protein</topology>
    </subcellularLocation>
</comment>
<comment type="alternative products">
    <event type="alternative splicing"/>
    <isoform>
        <id>Q9FVS9-1</id>
        <name>1</name>
        <sequence type="displayed"/>
    </isoform>
    <text>A number of isoforms are produced. According to EST sequences.</text>
</comment>
<comment type="tissue specificity">
    <text evidence="4">Expressed in the expanding regions of the inflorescence stems, specifically to the epidermal pavement cells, petioles and siliques.</text>
</comment>
<comment type="disruption phenotype">
    <text evidence="4 5">No visible phenotype under normal growth conditions, but stem wax of mutant plants are devoid of secondary alcohols and ketones and have increased alkane amounts.</text>
</comment>
<comment type="similarity">
    <text evidence="3">Belongs to the cytochrome P450 family.</text>
</comment>
<feature type="chain" id="PRO_0000431452" description="Alkane hydroxylase MAH1">
    <location>
        <begin position="1"/>
        <end position="497"/>
    </location>
</feature>
<feature type="transmembrane region" description="Helical" evidence="2">
    <location>
        <begin position="3"/>
        <end position="23"/>
    </location>
</feature>
<feature type="binding site" description="axial binding residue" evidence="1">
    <location>
        <position position="444"/>
    </location>
    <ligand>
        <name>heme</name>
        <dbReference type="ChEBI" id="CHEBI:30413"/>
    </ligand>
    <ligandPart>
        <name>Fe</name>
        <dbReference type="ChEBI" id="CHEBI:18248"/>
    </ligandPart>
</feature>
<accession>Q9FVS9</accession>
<sequence>MAMLGFYVTFIFFLVCLFTYFFLQKKPQGQPILKNWPFLRMLPGMLHQIPRIYDWTVEVLEATNLTFYFKGPWLSGTDMLFTADPRNIHHILSSNFGNYPKGPEFKKIFDVLGEGILTVDFELWEEMRKSNHALFHNQDFIELSVSSNKSKLKEGLVPFLDNAAQKNIIIELQDVFQRFMFDTSSILMTGYDPMSLSIEMLEVEFGEAADIGEEAIYYRHFKPVILWRLQNWIGIGLERKMRTALATVNRMFAKIISSRRKEEISRAKTEPYSKDALTYYMNVDTSKYKLLKPNKDKFIRDVIFSLVLAGRDTTSSVLTWFFWLLSKHPQVMAKLRHEINTKFDNEDLEKLVYLHAALSESMRLYPPLPFNHKSPAKPDVLPSGHKVDANSKIVICIYALGRMRSVWGEDALDFKPERWISDNGGLRHEPSYKFMAFNSGPRTCLGKNLALLQMKMVALEIIRNYDFKVIEGHKVEPIPSILLRMKHGLKVTVTKKI</sequence>
<reference key="1">
    <citation type="journal article" date="2000" name="Nature">
        <title>Sequence and analysis of chromosome 1 of the plant Arabidopsis thaliana.</title>
        <authorList>
            <person name="Theologis A."/>
            <person name="Ecker J.R."/>
            <person name="Palm C.J."/>
            <person name="Federspiel N.A."/>
            <person name="Kaul S."/>
            <person name="White O."/>
            <person name="Alonso J."/>
            <person name="Altafi H."/>
            <person name="Araujo R."/>
            <person name="Bowman C.L."/>
            <person name="Brooks S.Y."/>
            <person name="Buehler E."/>
            <person name="Chan A."/>
            <person name="Chao Q."/>
            <person name="Chen H."/>
            <person name="Cheuk R.F."/>
            <person name="Chin C.W."/>
            <person name="Chung M.K."/>
            <person name="Conn L."/>
            <person name="Conway A.B."/>
            <person name="Conway A.R."/>
            <person name="Creasy T.H."/>
            <person name="Dewar K."/>
            <person name="Dunn P."/>
            <person name="Etgu P."/>
            <person name="Feldblyum T.V."/>
            <person name="Feng J.-D."/>
            <person name="Fong B."/>
            <person name="Fujii C.Y."/>
            <person name="Gill J.E."/>
            <person name="Goldsmith A.D."/>
            <person name="Haas B."/>
            <person name="Hansen N.F."/>
            <person name="Hughes B."/>
            <person name="Huizar L."/>
            <person name="Hunter J.L."/>
            <person name="Jenkins J."/>
            <person name="Johnson-Hopson C."/>
            <person name="Khan S."/>
            <person name="Khaykin E."/>
            <person name="Kim C.J."/>
            <person name="Koo H.L."/>
            <person name="Kremenetskaia I."/>
            <person name="Kurtz D.B."/>
            <person name="Kwan A."/>
            <person name="Lam B."/>
            <person name="Langin-Hooper S."/>
            <person name="Lee A."/>
            <person name="Lee J.M."/>
            <person name="Lenz C.A."/>
            <person name="Li J.H."/>
            <person name="Li Y.-P."/>
            <person name="Lin X."/>
            <person name="Liu S.X."/>
            <person name="Liu Z.A."/>
            <person name="Luros J.S."/>
            <person name="Maiti R."/>
            <person name="Marziali A."/>
            <person name="Militscher J."/>
            <person name="Miranda M."/>
            <person name="Nguyen M."/>
            <person name="Nierman W.C."/>
            <person name="Osborne B.I."/>
            <person name="Pai G."/>
            <person name="Peterson J."/>
            <person name="Pham P.K."/>
            <person name="Rizzo M."/>
            <person name="Rooney T."/>
            <person name="Rowley D."/>
            <person name="Sakano H."/>
            <person name="Salzberg S.L."/>
            <person name="Schwartz J.R."/>
            <person name="Shinn P."/>
            <person name="Southwick A.M."/>
            <person name="Sun H."/>
            <person name="Tallon L.J."/>
            <person name="Tambunga G."/>
            <person name="Toriumi M.J."/>
            <person name="Town C.D."/>
            <person name="Utterback T."/>
            <person name="Van Aken S."/>
            <person name="Vaysberg M."/>
            <person name="Vysotskaia V.S."/>
            <person name="Walker M."/>
            <person name="Wu D."/>
            <person name="Yu G."/>
            <person name="Fraser C.M."/>
            <person name="Venter J.C."/>
            <person name="Davis R.W."/>
        </authorList>
    </citation>
    <scope>NUCLEOTIDE SEQUENCE [LARGE SCALE GENOMIC DNA]</scope>
    <source>
        <strain>cv. Columbia</strain>
    </source>
</reference>
<reference key="2">
    <citation type="journal article" date="2017" name="Plant J.">
        <title>Araport11: a complete reannotation of the Arabidopsis thaliana reference genome.</title>
        <authorList>
            <person name="Cheng C.Y."/>
            <person name="Krishnakumar V."/>
            <person name="Chan A.P."/>
            <person name="Thibaud-Nissen F."/>
            <person name="Schobel S."/>
            <person name="Town C.D."/>
        </authorList>
    </citation>
    <scope>GENOME REANNOTATION</scope>
    <source>
        <strain>cv. Columbia</strain>
    </source>
</reference>
<reference key="3">
    <citation type="journal article" date="2003" name="Science">
        <title>Empirical analysis of transcriptional activity in the Arabidopsis genome.</title>
        <authorList>
            <person name="Yamada K."/>
            <person name="Lim J."/>
            <person name="Dale J.M."/>
            <person name="Chen H."/>
            <person name="Shinn P."/>
            <person name="Palm C.J."/>
            <person name="Southwick A.M."/>
            <person name="Wu H.C."/>
            <person name="Kim C.J."/>
            <person name="Nguyen M."/>
            <person name="Pham P.K."/>
            <person name="Cheuk R.F."/>
            <person name="Karlin-Newmann G."/>
            <person name="Liu S.X."/>
            <person name="Lam B."/>
            <person name="Sakano H."/>
            <person name="Wu T."/>
            <person name="Yu G."/>
            <person name="Miranda M."/>
            <person name="Quach H.L."/>
            <person name="Tripp M."/>
            <person name="Chang C.H."/>
            <person name="Lee J.M."/>
            <person name="Toriumi M.J."/>
            <person name="Chan M.M."/>
            <person name="Tang C.C."/>
            <person name="Onodera C.S."/>
            <person name="Deng J.M."/>
            <person name="Akiyama K."/>
            <person name="Ansari Y."/>
            <person name="Arakawa T."/>
            <person name="Banh J."/>
            <person name="Banno F."/>
            <person name="Bowser L."/>
            <person name="Brooks S.Y."/>
            <person name="Carninci P."/>
            <person name="Chao Q."/>
            <person name="Choy N."/>
            <person name="Enju A."/>
            <person name="Goldsmith A.D."/>
            <person name="Gurjal M."/>
            <person name="Hansen N.F."/>
            <person name="Hayashizaki Y."/>
            <person name="Johnson-Hopson C."/>
            <person name="Hsuan V.W."/>
            <person name="Iida K."/>
            <person name="Karnes M."/>
            <person name="Khan S."/>
            <person name="Koesema E."/>
            <person name="Ishida J."/>
            <person name="Jiang P.X."/>
            <person name="Jones T."/>
            <person name="Kawai J."/>
            <person name="Kamiya A."/>
            <person name="Meyers C."/>
            <person name="Nakajima M."/>
            <person name="Narusaka M."/>
            <person name="Seki M."/>
            <person name="Sakurai T."/>
            <person name="Satou M."/>
            <person name="Tamse R."/>
            <person name="Vaysberg M."/>
            <person name="Wallender E.K."/>
            <person name="Wong C."/>
            <person name="Yamamura Y."/>
            <person name="Yuan S."/>
            <person name="Shinozaki K."/>
            <person name="Davis R.W."/>
            <person name="Theologis A."/>
            <person name="Ecker J.R."/>
        </authorList>
    </citation>
    <scope>NUCLEOTIDE SEQUENCE [LARGE SCALE MRNA]</scope>
    <source>
        <strain>cv. Columbia</strain>
    </source>
</reference>
<reference key="4">
    <citation type="journal article" date="2007" name="Plant Physiol.">
        <title>The cytochrome P450 enzyme CYP96A15 is the midchain alkane hydroxylase responsible for formation of secondary alcohols and ketones in stem cuticular wax of Arabidopsis.</title>
        <authorList>
            <person name="Greer S."/>
            <person name="Wen M."/>
            <person name="Bird D."/>
            <person name="Wu X."/>
            <person name="Samuels L."/>
            <person name="Kunst L."/>
            <person name="Jetter R."/>
        </authorList>
    </citation>
    <scope>FUNCTION</scope>
    <scope>SUBCELLULAR LOCATION</scope>
    <scope>TISSUE SPECIFICITY</scope>
    <scope>DISRUPTION PHENOTYPE</scope>
</reference>
<reference key="5">
    <citation type="journal article" date="2009" name="J. Exp. Bot.">
        <title>Composition of secondary alcohols, ketones, alkanediols, and ketols in Arabidopsis thaliana cuticular waxes.</title>
        <authorList>
            <person name="Wen M."/>
            <person name="Jetter R."/>
        </authorList>
    </citation>
    <scope>DISRUPTION PHENOTYPE</scope>
</reference>
<organism>
    <name type="scientific">Arabidopsis thaliana</name>
    <name type="common">Mouse-ear cress</name>
    <dbReference type="NCBI Taxonomy" id="3702"/>
    <lineage>
        <taxon>Eukaryota</taxon>
        <taxon>Viridiplantae</taxon>
        <taxon>Streptophyta</taxon>
        <taxon>Embryophyta</taxon>
        <taxon>Tracheophyta</taxon>
        <taxon>Spermatophyta</taxon>
        <taxon>Magnoliopsida</taxon>
        <taxon>eudicotyledons</taxon>
        <taxon>Gunneridae</taxon>
        <taxon>Pentapetalae</taxon>
        <taxon>rosids</taxon>
        <taxon>malvids</taxon>
        <taxon>Brassicales</taxon>
        <taxon>Brassicaceae</taxon>
        <taxon>Camelineae</taxon>
        <taxon>Arabidopsis</taxon>
    </lineage>
</organism>
<evidence type="ECO:0000250" key="1">
    <source>
        <dbReference type="UniProtKB" id="Q96242"/>
    </source>
</evidence>
<evidence type="ECO:0000255" key="2"/>
<evidence type="ECO:0000255" key="3">
    <source>
        <dbReference type="RuleBase" id="RU000461"/>
    </source>
</evidence>
<evidence type="ECO:0000269" key="4">
    <source>
    </source>
</evidence>
<evidence type="ECO:0000269" key="5">
    <source>
    </source>
</evidence>
<evidence type="ECO:0000303" key="6">
    <source>
    </source>
</evidence>
<evidence type="ECO:0000305" key="7"/>
<evidence type="ECO:0000305" key="8">
    <source>
    </source>
</evidence>
<evidence type="ECO:0000312" key="9">
    <source>
        <dbReference type="Araport" id="AT1G57750"/>
    </source>
</evidence>
<evidence type="ECO:0000312" key="10">
    <source>
        <dbReference type="EMBL" id="AAG50737.1"/>
    </source>
</evidence>
<keyword id="KW-0025">Alternative splicing</keyword>
<keyword id="KW-0256">Endoplasmic reticulum</keyword>
<keyword id="KW-0349">Heme</keyword>
<keyword id="KW-0408">Iron</keyword>
<keyword id="KW-0472">Membrane</keyword>
<keyword id="KW-0479">Metal-binding</keyword>
<keyword id="KW-0503">Monooxygenase</keyword>
<keyword id="KW-0560">Oxidoreductase</keyword>
<keyword id="KW-1185">Reference proteome</keyword>
<keyword id="KW-0812">Transmembrane</keyword>
<keyword id="KW-1133">Transmembrane helix</keyword>
<dbReference type="EC" id="1.14.-.-" evidence="8"/>
<dbReference type="EMBL" id="AC079733">
    <property type="protein sequence ID" value="AAG50737.1"/>
    <property type="molecule type" value="Genomic_DNA"/>
</dbReference>
<dbReference type="EMBL" id="CP002684">
    <property type="protein sequence ID" value="AEE33458.1"/>
    <property type="molecule type" value="Genomic_DNA"/>
</dbReference>
<dbReference type="EMBL" id="AF419610">
    <property type="protein sequence ID" value="AAL31942.1"/>
    <property type="molecule type" value="mRNA"/>
</dbReference>
<dbReference type="EMBL" id="AY090941">
    <property type="protein sequence ID" value="AAM13991.1"/>
    <property type="molecule type" value="mRNA"/>
</dbReference>
<dbReference type="EMBL" id="BT005810">
    <property type="protein sequence ID" value="AAO64745.1"/>
    <property type="molecule type" value="mRNA"/>
</dbReference>
<dbReference type="PIR" id="G96611">
    <property type="entry name" value="G96611"/>
</dbReference>
<dbReference type="RefSeq" id="NP_176086.1">
    <molecule id="Q9FVS9-1"/>
    <property type="nucleotide sequence ID" value="NM_104570.3"/>
</dbReference>
<dbReference type="SMR" id="Q9FVS9"/>
<dbReference type="FunCoup" id="Q9FVS9">
    <property type="interactions" value="227"/>
</dbReference>
<dbReference type="IntAct" id="Q9FVS9">
    <property type="interactions" value="1"/>
</dbReference>
<dbReference type="STRING" id="3702.Q9FVS9"/>
<dbReference type="iPTMnet" id="Q9FVS9"/>
<dbReference type="PaxDb" id="3702-AT1G57750.1"/>
<dbReference type="ProteomicsDB" id="240459">
    <molecule id="Q9FVS9-1"/>
</dbReference>
<dbReference type="EnsemblPlants" id="AT1G57750.1">
    <molecule id="Q9FVS9-1"/>
    <property type="protein sequence ID" value="AT1G57750.1"/>
    <property type="gene ID" value="AT1G57750"/>
</dbReference>
<dbReference type="GeneID" id="842150"/>
<dbReference type="Gramene" id="AT1G57750.1">
    <molecule id="Q9FVS9-1"/>
    <property type="protein sequence ID" value="AT1G57750.1"/>
    <property type="gene ID" value="AT1G57750"/>
</dbReference>
<dbReference type="KEGG" id="ath:AT1G57750"/>
<dbReference type="Araport" id="AT1G57750"/>
<dbReference type="TAIR" id="AT1G57750">
    <property type="gene designation" value="CYP96A15"/>
</dbReference>
<dbReference type="eggNOG" id="KOG0157">
    <property type="taxonomic scope" value="Eukaryota"/>
</dbReference>
<dbReference type="HOGENOM" id="CLU_001570_27_2_1"/>
<dbReference type="InParanoid" id="Q9FVS9"/>
<dbReference type="OMA" id="ESMRMYH"/>
<dbReference type="PhylomeDB" id="Q9FVS9"/>
<dbReference type="BioCyc" id="ARA:AT1G57750-MONOMER"/>
<dbReference type="BioCyc" id="MetaCyc:AT1G57750-MONOMER"/>
<dbReference type="PRO" id="PR:Q9FVS9"/>
<dbReference type="Proteomes" id="UP000006548">
    <property type="component" value="Chromosome 1"/>
</dbReference>
<dbReference type="ExpressionAtlas" id="Q9FVS9">
    <property type="expression patterns" value="baseline and differential"/>
</dbReference>
<dbReference type="GO" id="GO:0005783">
    <property type="term" value="C:endoplasmic reticulum"/>
    <property type="evidence" value="ECO:0000314"/>
    <property type="project" value="TAIR"/>
</dbReference>
<dbReference type="GO" id="GO:0005789">
    <property type="term" value="C:endoplasmic reticulum membrane"/>
    <property type="evidence" value="ECO:0007669"/>
    <property type="project" value="UniProtKB-SubCell"/>
</dbReference>
<dbReference type="GO" id="GO:0020037">
    <property type="term" value="F:heme binding"/>
    <property type="evidence" value="ECO:0007669"/>
    <property type="project" value="InterPro"/>
</dbReference>
<dbReference type="GO" id="GO:0005506">
    <property type="term" value="F:iron ion binding"/>
    <property type="evidence" value="ECO:0007669"/>
    <property type="project" value="InterPro"/>
</dbReference>
<dbReference type="GO" id="GO:0080133">
    <property type="term" value="F:midchain alkane hydroxylase activity"/>
    <property type="evidence" value="ECO:0000315"/>
    <property type="project" value="TAIR"/>
</dbReference>
<dbReference type="GO" id="GO:0010025">
    <property type="term" value="P:wax biosynthetic process"/>
    <property type="evidence" value="ECO:0000315"/>
    <property type="project" value="TAIR"/>
</dbReference>
<dbReference type="CDD" id="cd11064">
    <property type="entry name" value="CYP86A"/>
    <property type="match status" value="1"/>
</dbReference>
<dbReference type="FunFam" id="1.10.630.10:FF:000119">
    <property type="entry name" value="Alkane hydroxylase MAH1"/>
    <property type="match status" value="1"/>
</dbReference>
<dbReference type="Gene3D" id="1.10.630.10">
    <property type="entry name" value="Cytochrome P450"/>
    <property type="match status" value="1"/>
</dbReference>
<dbReference type="InterPro" id="IPR001128">
    <property type="entry name" value="Cyt_P450"/>
</dbReference>
<dbReference type="InterPro" id="IPR017972">
    <property type="entry name" value="Cyt_P450_CS"/>
</dbReference>
<dbReference type="InterPro" id="IPR002401">
    <property type="entry name" value="Cyt_P450_E_grp-I"/>
</dbReference>
<dbReference type="InterPro" id="IPR036396">
    <property type="entry name" value="Cyt_P450_sf"/>
</dbReference>
<dbReference type="PANTHER" id="PTHR24296">
    <property type="entry name" value="CYTOCHROME P450"/>
    <property type="match status" value="1"/>
</dbReference>
<dbReference type="Pfam" id="PF00067">
    <property type="entry name" value="p450"/>
    <property type="match status" value="1"/>
</dbReference>
<dbReference type="PRINTS" id="PR00463">
    <property type="entry name" value="EP450I"/>
</dbReference>
<dbReference type="PRINTS" id="PR00385">
    <property type="entry name" value="P450"/>
</dbReference>
<dbReference type="SUPFAM" id="SSF48264">
    <property type="entry name" value="Cytochrome P450"/>
    <property type="match status" value="1"/>
</dbReference>
<dbReference type="PROSITE" id="PS00086">
    <property type="entry name" value="CYTOCHROME_P450"/>
    <property type="match status" value="1"/>
</dbReference>
<name>C96AF_ARATH</name>
<gene>
    <name evidence="7" type="primary">CYP96A15</name>
    <name evidence="6" type="synonym">MAH1</name>
    <name evidence="9" type="ordered locus">At1g57750</name>
    <name evidence="10" type="ORF">T8L23.21</name>
</gene>